<reference key="1">
    <citation type="journal article" date="2005" name="Nature">
        <title>The map-based sequence of the rice genome.</title>
        <authorList>
            <consortium name="International rice genome sequencing project (IRGSP)"/>
        </authorList>
    </citation>
    <scope>NUCLEOTIDE SEQUENCE [LARGE SCALE GENOMIC DNA]</scope>
    <source>
        <strain>cv. Nipponbare</strain>
    </source>
</reference>
<reference key="2">
    <citation type="journal article" date="2008" name="Nucleic Acids Res.">
        <title>The rice annotation project database (RAP-DB): 2008 update.</title>
        <authorList>
            <consortium name="The rice annotation project (RAP)"/>
        </authorList>
    </citation>
    <scope>GENOME REANNOTATION</scope>
    <source>
        <strain>cv. Nipponbare</strain>
    </source>
</reference>
<reference key="3">
    <citation type="journal article" date="2013" name="Rice">
        <title>Improvement of the Oryza sativa Nipponbare reference genome using next generation sequence and optical map data.</title>
        <authorList>
            <person name="Kawahara Y."/>
            <person name="de la Bastide M."/>
            <person name="Hamilton J.P."/>
            <person name="Kanamori H."/>
            <person name="McCombie W.R."/>
            <person name="Ouyang S."/>
            <person name="Schwartz D.C."/>
            <person name="Tanaka T."/>
            <person name="Wu J."/>
            <person name="Zhou S."/>
            <person name="Childs K.L."/>
            <person name="Davidson R.M."/>
            <person name="Lin H."/>
            <person name="Quesada-Ocampo L."/>
            <person name="Vaillancourt B."/>
            <person name="Sakai H."/>
            <person name="Lee S.S."/>
            <person name="Kim J."/>
            <person name="Numa H."/>
            <person name="Itoh T."/>
            <person name="Buell C.R."/>
            <person name="Matsumoto T."/>
        </authorList>
    </citation>
    <scope>GENOME REANNOTATION</scope>
    <source>
        <strain>cv. Nipponbare</strain>
    </source>
</reference>
<reference key="4">
    <citation type="journal article" date="2008" name="BMC Genomics">
        <title>Genome-wide analysis of CCCH zinc finger family in Arabidopsis and rice.</title>
        <authorList>
            <person name="Wang D."/>
            <person name="Guo Y."/>
            <person name="Wu C."/>
            <person name="Yang G."/>
            <person name="Li Y."/>
            <person name="Zheng C."/>
        </authorList>
    </citation>
    <scope>NOMENCLATURE</scope>
</reference>
<accession>Q0DA50</accession>
<accession>Q653U4</accession>
<feature type="chain" id="PRO_0000346839" description="Zinc finger CCCH domain-containing protein 45">
    <location>
        <begin position="1"/>
        <end position="665"/>
    </location>
</feature>
<feature type="domain" description="YTH" evidence="2">
    <location>
        <begin position="260"/>
        <end position="395"/>
    </location>
</feature>
<feature type="zinc finger region" description="C3H1-type 1" evidence="3">
    <location>
        <begin position="58"/>
        <end position="85"/>
    </location>
</feature>
<feature type="zinc finger region" description="C3H1-type 2" evidence="3">
    <location>
        <begin position="86"/>
        <end position="113"/>
    </location>
</feature>
<feature type="zinc finger region" description="C3H1-type 3" evidence="3">
    <location>
        <begin position="114"/>
        <end position="139"/>
    </location>
</feature>
<feature type="region of interest" description="Disordered" evidence="4">
    <location>
        <begin position="1"/>
        <end position="55"/>
    </location>
</feature>
<feature type="region of interest" description="Disordered" evidence="4">
    <location>
        <begin position="167"/>
        <end position="256"/>
    </location>
</feature>
<feature type="region of interest" description="Disordered" evidence="4">
    <location>
        <begin position="439"/>
        <end position="469"/>
    </location>
</feature>
<feature type="region of interest" description="Disordered" evidence="4">
    <location>
        <begin position="561"/>
        <end position="665"/>
    </location>
</feature>
<feature type="coiled-coil region" evidence="1">
    <location>
        <begin position="432"/>
        <end position="459"/>
    </location>
</feature>
<feature type="compositionally biased region" description="Gly residues" evidence="4">
    <location>
        <begin position="33"/>
        <end position="50"/>
    </location>
</feature>
<feature type="compositionally biased region" description="Polar residues" evidence="4">
    <location>
        <begin position="169"/>
        <end position="200"/>
    </location>
</feature>
<feature type="compositionally biased region" description="Low complexity" evidence="4">
    <location>
        <begin position="205"/>
        <end position="238"/>
    </location>
</feature>
<feature type="compositionally biased region" description="Polar residues" evidence="4">
    <location>
        <begin position="239"/>
        <end position="250"/>
    </location>
</feature>
<feature type="compositionally biased region" description="Acidic residues" evidence="4">
    <location>
        <begin position="439"/>
        <end position="454"/>
    </location>
</feature>
<feature type="compositionally biased region" description="Gly residues" evidence="4">
    <location>
        <begin position="561"/>
        <end position="573"/>
    </location>
</feature>
<feature type="compositionally biased region" description="Basic and acidic residues" evidence="4">
    <location>
        <begin position="596"/>
        <end position="623"/>
    </location>
</feature>
<evidence type="ECO:0000255" key="1"/>
<evidence type="ECO:0000255" key="2">
    <source>
        <dbReference type="PROSITE-ProRule" id="PRU00225"/>
    </source>
</evidence>
<evidence type="ECO:0000255" key="3">
    <source>
        <dbReference type="PROSITE-ProRule" id="PRU00723"/>
    </source>
</evidence>
<evidence type="ECO:0000256" key="4">
    <source>
        <dbReference type="SAM" id="MobiDB-lite"/>
    </source>
</evidence>
<evidence type="ECO:0000305" key="5"/>
<sequence>MDDGDLSFDFEGGLDQPPAGGGGGPAPHSSDPGGVGGGGGGGGPGDGGGHGRGRGRGSYRQTVCRHWLRGLCMKGEACGFLHQFDKARMPVCRFFRDFGECREPDCAYKHSYDDVKECNMYKMGFCPNGPNCRYKHVKLPGPPPPVEEVLQKILQIRSFNKFNQHRHNNYNQQGERPQHPQGSGLPNQNSIDNTTTTTAQPAVGQQAQTTNQQPPQQQQQQQQQQQQQQKPNTNDQVQSVPNGSSNQATRIATPLPQGPSRYFIVKSCNRENLEISVQQGIWATQRSNEAKLNEAFESIENVILIFSINRTRNFQGCAKMTSRIGGYIGGGNWKSAHGTAHYGRNFSIQWLKLCELSFQKTHHLRNPYNDNLPVKISRDCQELEPFIGEQLASLLYLEPDSELTAILIAAEAKKEEEKAKGVSADEAADNQDIVLFDDNEEEEEEESEEEEEGNGQESQGRGRGRGMMWPPQMPMLRGVGPMMGGRGFPPNMIGDGFGFGGGFGMPDPFGVPRGFPPFGPRFPGDFARGGPMPGMVFPGRPPQPGGMFPMGLEMMMGPGRGPLMGGLGMGGPGRPNRPVGMAPFMPPPPPPNNRGTKREQRRPGGERGDRYETTSDQGSRGHDATGNSGAEGARSQSGDRYGRSALRDDDSESDEEAAPRRSRKR</sequence>
<dbReference type="EMBL" id="AP003728">
    <property type="protein sequence ID" value="BAD45526.1"/>
    <property type="status" value="ALT_SEQ"/>
    <property type="molecule type" value="Genomic_DNA"/>
</dbReference>
<dbReference type="EMBL" id="AP004989">
    <property type="protein sequence ID" value="BAD45923.1"/>
    <property type="status" value="ALT_SEQ"/>
    <property type="molecule type" value="Genomic_DNA"/>
</dbReference>
<dbReference type="EMBL" id="AP008212">
    <property type="protein sequence ID" value="BAF20273.1"/>
    <property type="molecule type" value="Genomic_DNA"/>
</dbReference>
<dbReference type="EMBL" id="AP014962">
    <property type="status" value="NOT_ANNOTATED_CDS"/>
    <property type="molecule type" value="Genomic_DNA"/>
</dbReference>
<dbReference type="RefSeq" id="XP_015644405.1">
    <property type="nucleotide sequence ID" value="XM_015788919.1"/>
</dbReference>
<dbReference type="SMR" id="Q0DA50"/>
<dbReference type="FunCoup" id="Q0DA50">
    <property type="interactions" value="644"/>
</dbReference>
<dbReference type="STRING" id="39947.Q0DA50"/>
<dbReference type="iPTMnet" id="Q0DA50"/>
<dbReference type="PaxDb" id="39947-Q0DA50"/>
<dbReference type="KEGG" id="dosa:Os06g0677700"/>
<dbReference type="eggNOG" id="KOG1040">
    <property type="taxonomic scope" value="Eukaryota"/>
</dbReference>
<dbReference type="eggNOG" id="KOG1902">
    <property type="taxonomic scope" value="Eukaryota"/>
</dbReference>
<dbReference type="HOGENOM" id="CLU_413563_0_0_1"/>
<dbReference type="InParanoid" id="Q0DA50"/>
<dbReference type="OrthoDB" id="306690at2759"/>
<dbReference type="Proteomes" id="UP000000763">
    <property type="component" value="Chromosome 6"/>
</dbReference>
<dbReference type="Proteomes" id="UP000059680">
    <property type="component" value="Chromosome 6"/>
</dbReference>
<dbReference type="GO" id="GO:0005654">
    <property type="term" value="C:nucleoplasm"/>
    <property type="evidence" value="ECO:0000318"/>
    <property type="project" value="GO_Central"/>
</dbReference>
<dbReference type="GO" id="GO:0003677">
    <property type="term" value="F:DNA binding"/>
    <property type="evidence" value="ECO:0007669"/>
    <property type="project" value="UniProtKB-KW"/>
</dbReference>
<dbReference type="GO" id="GO:0003729">
    <property type="term" value="F:mRNA binding"/>
    <property type="evidence" value="ECO:0000318"/>
    <property type="project" value="GO_Central"/>
</dbReference>
<dbReference type="GO" id="GO:1990247">
    <property type="term" value="F:N6-methyladenosine-containing RNA reader activity"/>
    <property type="evidence" value="ECO:0000318"/>
    <property type="project" value="GO_Central"/>
</dbReference>
<dbReference type="GO" id="GO:0008270">
    <property type="term" value="F:zinc ion binding"/>
    <property type="evidence" value="ECO:0007669"/>
    <property type="project" value="UniProtKB-KW"/>
</dbReference>
<dbReference type="GO" id="GO:0000398">
    <property type="term" value="P:mRNA splicing, via spliceosome"/>
    <property type="evidence" value="ECO:0000318"/>
    <property type="project" value="GO_Central"/>
</dbReference>
<dbReference type="GO" id="GO:0048024">
    <property type="term" value="P:regulation of mRNA splicing, via spliceosome"/>
    <property type="evidence" value="ECO:0000318"/>
    <property type="project" value="GO_Central"/>
</dbReference>
<dbReference type="CDD" id="cd21134">
    <property type="entry name" value="YTH"/>
    <property type="match status" value="1"/>
</dbReference>
<dbReference type="FunFam" id="4.10.1000.10:FF:000017">
    <property type="entry name" value="Cleavage and polyadenylation specificity factor 30 kDa subunit"/>
    <property type="match status" value="1"/>
</dbReference>
<dbReference type="Gene3D" id="3.10.590.10">
    <property type="entry name" value="ph1033 like domains"/>
    <property type="match status" value="1"/>
</dbReference>
<dbReference type="Gene3D" id="4.10.1000.10">
    <property type="entry name" value="Zinc finger, CCCH-type"/>
    <property type="match status" value="1"/>
</dbReference>
<dbReference type="InterPro" id="IPR007275">
    <property type="entry name" value="YTH_domain"/>
</dbReference>
<dbReference type="InterPro" id="IPR045168">
    <property type="entry name" value="YTH_prot"/>
</dbReference>
<dbReference type="InterPro" id="IPR000571">
    <property type="entry name" value="Znf_CCCH"/>
</dbReference>
<dbReference type="InterPro" id="IPR036855">
    <property type="entry name" value="Znf_CCCH_sf"/>
</dbReference>
<dbReference type="PANTHER" id="PTHR12357:SF119">
    <property type="entry name" value="30-KDA CLEAVAGE AND POLYADENYLATION SPECIFICITY FACTOR 30"/>
    <property type="match status" value="1"/>
</dbReference>
<dbReference type="PANTHER" id="PTHR12357">
    <property type="entry name" value="YTH YT521-B HOMOLOGY DOMAIN-CONTAINING"/>
    <property type="match status" value="1"/>
</dbReference>
<dbReference type="Pfam" id="PF04146">
    <property type="entry name" value="YTH"/>
    <property type="match status" value="1"/>
</dbReference>
<dbReference type="SMART" id="SM00356">
    <property type="entry name" value="ZnF_C3H1"/>
    <property type="match status" value="3"/>
</dbReference>
<dbReference type="SUPFAM" id="SSF90229">
    <property type="entry name" value="CCCH zinc finger"/>
    <property type="match status" value="1"/>
</dbReference>
<dbReference type="PROSITE" id="PS50882">
    <property type="entry name" value="YTH"/>
    <property type="match status" value="1"/>
</dbReference>
<dbReference type="PROSITE" id="PS50103">
    <property type="entry name" value="ZF_C3H1"/>
    <property type="match status" value="3"/>
</dbReference>
<keyword id="KW-0175">Coiled coil</keyword>
<keyword id="KW-0238">DNA-binding</keyword>
<keyword id="KW-0479">Metal-binding</keyword>
<keyword id="KW-1185">Reference proteome</keyword>
<keyword id="KW-0677">Repeat</keyword>
<keyword id="KW-0862">Zinc</keyword>
<keyword id="KW-0863">Zinc-finger</keyword>
<organism>
    <name type="scientific">Oryza sativa subsp. japonica</name>
    <name type="common">Rice</name>
    <dbReference type="NCBI Taxonomy" id="39947"/>
    <lineage>
        <taxon>Eukaryota</taxon>
        <taxon>Viridiplantae</taxon>
        <taxon>Streptophyta</taxon>
        <taxon>Embryophyta</taxon>
        <taxon>Tracheophyta</taxon>
        <taxon>Spermatophyta</taxon>
        <taxon>Magnoliopsida</taxon>
        <taxon>Liliopsida</taxon>
        <taxon>Poales</taxon>
        <taxon>Poaceae</taxon>
        <taxon>BOP clade</taxon>
        <taxon>Oryzoideae</taxon>
        <taxon>Oryzeae</taxon>
        <taxon>Oryzinae</taxon>
        <taxon>Oryza</taxon>
        <taxon>Oryza sativa</taxon>
    </lineage>
</organism>
<gene>
    <name type="ordered locus">Os06g0677700</name>
    <name type="ordered locus">LOC_Os06g46400</name>
    <name type="ORF">B1153E06.24</name>
    <name type="ORF">P0710B08.18</name>
</gene>
<name>C3H45_ORYSJ</name>
<protein>
    <recommendedName>
        <fullName>Zinc finger CCCH domain-containing protein 45</fullName>
        <shortName>OsC3H45</shortName>
    </recommendedName>
</protein>
<proteinExistence type="predicted"/>
<comment type="sequence caution" evidence="5">
    <conflict type="erroneous gene model prediction">
        <sequence resource="EMBL-CDS" id="BAD45526"/>
    </conflict>
</comment>
<comment type="sequence caution" evidence="5">
    <conflict type="erroneous gene model prediction">
        <sequence resource="EMBL-CDS" id="BAD45923"/>
    </conflict>
</comment>